<accession>A7Z968</accession>
<comment type="function">
    <text evidence="1">Required for the first step of histidine biosynthesis. May allow the feedback regulation of ATP phosphoribosyltransferase activity by histidine.</text>
</comment>
<comment type="pathway">
    <text evidence="1">Amino-acid biosynthesis; L-histidine biosynthesis; L-histidine from 5-phospho-alpha-D-ribose 1-diphosphate: step 1/9.</text>
</comment>
<comment type="subunit">
    <text evidence="1">Heteromultimer composed of HisG and HisZ subunits.</text>
</comment>
<comment type="subcellular location">
    <subcellularLocation>
        <location evidence="1">Cytoplasm</location>
    </subcellularLocation>
</comment>
<comment type="miscellaneous">
    <text>This function is generally fulfilled by the C-terminal part of HisG, which is missing in some bacteria such as this one.</text>
</comment>
<comment type="similarity">
    <text evidence="1">Belongs to the class-II aminoacyl-tRNA synthetase family. HisZ subfamily.</text>
</comment>
<dbReference type="EMBL" id="CP000560">
    <property type="protein sequence ID" value="ABS75544.1"/>
    <property type="molecule type" value="Genomic_DNA"/>
</dbReference>
<dbReference type="RefSeq" id="WP_007407436.1">
    <property type="nucleotide sequence ID" value="NC_009725.2"/>
</dbReference>
<dbReference type="SMR" id="A7Z968"/>
<dbReference type="GeneID" id="93082359"/>
<dbReference type="KEGG" id="bay:RBAM_032140"/>
<dbReference type="HOGENOM" id="CLU_025113_0_0_9"/>
<dbReference type="UniPathway" id="UPA00031">
    <property type="reaction ID" value="UER00006"/>
</dbReference>
<dbReference type="Proteomes" id="UP000001120">
    <property type="component" value="Chromosome"/>
</dbReference>
<dbReference type="GO" id="GO:0005737">
    <property type="term" value="C:cytoplasm"/>
    <property type="evidence" value="ECO:0007669"/>
    <property type="project" value="UniProtKB-SubCell"/>
</dbReference>
<dbReference type="GO" id="GO:0140096">
    <property type="term" value="F:catalytic activity, acting on a protein"/>
    <property type="evidence" value="ECO:0007669"/>
    <property type="project" value="UniProtKB-ARBA"/>
</dbReference>
<dbReference type="GO" id="GO:0004821">
    <property type="term" value="F:histidine-tRNA ligase activity"/>
    <property type="evidence" value="ECO:0007669"/>
    <property type="project" value="InterPro"/>
</dbReference>
<dbReference type="GO" id="GO:0016740">
    <property type="term" value="F:transferase activity"/>
    <property type="evidence" value="ECO:0007669"/>
    <property type="project" value="UniProtKB-ARBA"/>
</dbReference>
<dbReference type="GO" id="GO:0006427">
    <property type="term" value="P:histidyl-tRNA aminoacylation"/>
    <property type="evidence" value="ECO:0007669"/>
    <property type="project" value="InterPro"/>
</dbReference>
<dbReference type="GO" id="GO:0000105">
    <property type="term" value="P:L-histidine biosynthetic process"/>
    <property type="evidence" value="ECO:0007669"/>
    <property type="project" value="UniProtKB-UniRule"/>
</dbReference>
<dbReference type="CDD" id="cd00773">
    <property type="entry name" value="HisRS-like_core"/>
    <property type="match status" value="1"/>
</dbReference>
<dbReference type="Gene3D" id="3.40.50.12590">
    <property type="match status" value="1"/>
</dbReference>
<dbReference type="Gene3D" id="3.30.930.10">
    <property type="entry name" value="Bira Bifunctional Protein, Domain 2"/>
    <property type="match status" value="1"/>
</dbReference>
<dbReference type="HAMAP" id="MF_00125">
    <property type="entry name" value="HisZ"/>
    <property type="match status" value="1"/>
</dbReference>
<dbReference type="InterPro" id="IPR006195">
    <property type="entry name" value="aa-tRNA-synth_II"/>
</dbReference>
<dbReference type="InterPro" id="IPR045864">
    <property type="entry name" value="aa-tRNA-synth_II/BPL/LPL"/>
</dbReference>
<dbReference type="InterPro" id="IPR041715">
    <property type="entry name" value="HisRS-like_core"/>
</dbReference>
<dbReference type="InterPro" id="IPR004516">
    <property type="entry name" value="HisRS/HisZ"/>
</dbReference>
<dbReference type="InterPro" id="IPR004517">
    <property type="entry name" value="HisZ"/>
</dbReference>
<dbReference type="InterPro" id="IPR053846">
    <property type="entry name" value="HisZ-C"/>
</dbReference>
<dbReference type="NCBIfam" id="TIGR00443">
    <property type="entry name" value="hisZ_biosyn_reg"/>
    <property type="match status" value="1"/>
</dbReference>
<dbReference type="NCBIfam" id="NF008941">
    <property type="entry name" value="PRK12292.2-4"/>
    <property type="match status" value="1"/>
</dbReference>
<dbReference type="PANTHER" id="PTHR43707:SF1">
    <property type="entry name" value="HISTIDINE--TRNA LIGASE, MITOCHONDRIAL-RELATED"/>
    <property type="match status" value="1"/>
</dbReference>
<dbReference type="PANTHER" id="PTHR43707">
    <property type="entry name" value="HISTIDYL-TRNA SYNTHETASE"/>
    <property type="match status" value="1"/>
</dbReference>
<dbReference type="Pfam" id="PF21996">
    <property type="entry name" value="HisZ-like"/>
    <property type="match status" value="1"/>
</dbReference>
<dbReference type="Pfam" id="PF13393">
    <property type="entry name" value="tRNA-synt_His"/>
    <property type="match status" value="1"/>
</dbReference>
<dbReference type="PIRSF" id="PIRSF001549">
    <property type="entry name" value="His-tRNA_synth"/>
    <property type="match status" value="1"/>
</dbReference>
<dbReference type="SUPFAM" id="SSF55681">
    <property type="entry name" value="Class II aaRS and biotin synthetases"/>
    <property type="match status" value="1"/>
</dbReference>
<dbReference type="PROSITE" id="PS50862">
    <property type="entry name" value="AA_TRNA_LIGASE_II"/>
    <property type="match status" value="1"/>
</dbReference>
<sequence>MFMFEKPHGMRDTLPGLYEAKKKVRSTLTDLIDKWGYQFMETPTLEFYETVGVQSAIEEQQLFKLLDQDGKTLVLRPDMTGPIARVAASKLHKHNHPLRAGYAASVYRAQEREGGRPAEFEQVGAELIGDGSTSADAEVIALAAGALKNAGLHRFKIAIGHAGLADELFVEVLGNAERADVLRRFLFEKNYVGYREHVKSLPLSSIDKSRLLALLELRGGKEICAKAEEIIGISGQSLIQELEDLWDILEDYGCAEHIRLDLNMVSHMSYYTGILFEVYAANVGFVIGSGGRYNNLLGHFGSPAPATGFGLRIDRLIEALGIQEETSEADAVIFSKEQRAQAILFAEEERARGRKVVLQDLAGIENIDHMTKSFANVTYFIGARKEEQNG</sequence>
<evidence type="ECO:0000255" key="1">
    <source>
        <dbReference type="HAMAP-Rule" id="MF_00125"/>
    </source>
</evidence>
<proteinExistence type="inferred from homology"/>
<reference key="1">
    <citation type="journal article" date="2007" name="Nat. Biotechnol.">
        <title>Comparative analysis of the complete genome sequence of the plant growth-promoting bacterium Bacillus amyloliquefaciens FZB42.</title>
        <authorList>
            <person name="Chen X.H."/>
            <person name="Koumoutsi A."/>
            <person name="Scholz R."/>
            <person name="Eisenreich A."/>
            <person name="Schneider K."/>
            <person name="Heinemeyer I."/>
            <person name="Morgenstern B."/>
            <person name="Voss B."/>
            <person name="Hess W.R."/>
            <person name="Reva O."/>
            <person name="Junge H."/>
            <person name="Voigt B."/>
            <person name="Jungblut P.R."/>
            <person name="Vater J."/>
            <person name="Suessmuth R."/>
            <person name="Liesegang H."/>
            <person name="Strittmatter A."/>
            <person name="Gottschalk G."/>
            <person name="Borriss R."/>
        </authorList>
    </citation>
    <scope>NUCLEOTIDE SEQUENCE [LARGE SCALE GENOMIC DNA]</scope>
    <source>
        <strain>DSM 23117 / BGSC 10A6 / LMG 26770 / FZB42</strain>
    </source>
</reference>
<protein>
    <recommendedName>
        <fullName evidence="1">ATP phosphoribosyltransferase regulatory subunit</fullName>
    </recommendedName>
</protein>
<keyword id="KW-0028">Amino-acid biosynthesis</keyword>
<keyword id="KW-0963">Cytoplasm</keyword>
<keyword id="KW-0368">Histidine biosynthesis</keyword>
<feature type="chain" id="PRO_1000016245" description="ATP phosphoribosyltransferase regulatory subunit">
    <location>
        <begin position="1"/>
        <end position="390"/>
    </location>
</feature>
<organism>
    <name type="scientific">Bacillus velezensis (strain DSM 23117 / BGSC 10A6 / LMG 26770 / FZB42)</name>
    <name type="common">Bacillus amyloliquefaciens subsp. plantarum</name>
    <dbReference type="NCBI Taxonomy" id="326423"/>
    <lineage>
        <taxon>Bacteria</taxon>
        <taxon>Bacillati</taxon>
        <taxon>Bacillota</taxon>
        <taxon>Bacilli</taxon>
        <taxon>Bacillales</taxon>
        <taxon>Bacillaceae</taxon>
        <taxon>Bacillus</taxon>
        <taxon>Bacillus amyloliquefaciens group</taxon>
    </lineage>
</organism>
<name>HISZ_BACVZ</name>
<gene>
    <name evidence="1" type="primary">hisZ</name>
    <name type="ordered locus">RBAM_032140</name>
</gene>